<reference key="1">
    <citation type="submission" date="2007-10" db="EMBL/GenBank/DDBJ databases">
        <title>Complete sequence of chromosome 1 of Burkholderia multivorans ATCC 17616.</title>
        <authorList>
            <person name="Copeland A."/>
            <person name="Lucas S."/>
            <person name="Lapidus A."/>
            <person name="Barry K."/>
            <person name="Glavina del Rio T."/>
            <person name="Dalin E."/>
            <person name="Tice H."/>
            <person name="Pitluck S."/>
            <person name="Chain P."/>
            <person name="Malfatti S."/>
            <person name="Shin M."/>
            <person name="Vergez L."/>
            <person name="Schmutz J."/>
            <person name="Larimer F."/>
            <person name="Land M."/>
            <person name="Hauser L."/>
            <person name="Kyrpides N."/>
            <person name="Kim E."/>
            <person name="Tiedje J."/>
            <person name="Richardson P."/>
        </authorList>
    </citation>
    <scope>NUCLEOTIDE SEQUENCE [LARGE SCALE GENOMIC DNA]</scope>
    <source>
        <strain>ATCC 17616 / 249</strain>
    </source>
</reference>
<reference key="2">
    <citation type="submission" date="2007-04" db="EMBL/GenBank/DDBJ databases">
        <title>Complete genome sequence of Burkholderia multivorans ATCC 17616.</title>
        <authorList>
            <person name="Ohtsubo Y."/>
            <person name="Yamashita A."/>
            <person name="Kurokawa K."/>
            <person name="Takami H."/>
            <person name="Yuhara S."/>
            <person name="Nishiyama E."/>
            <person name="Endo R."/>
            <person name="Miyazaki R."/>
            <person name="Ono A."/>
            <person name="Yano K."/>
            <person name="Ito M."/>
            <person name="Sota M."/>
            <person name="Yuji N."/>
            <person name="Hattori M."/>
            <person name="Tsuda M."/>
        </authorList>
    </citation>
    <scope>NUCLEOTIDE SEQUENCE [LARGE SCALE GENOMIC DNA]</scope>
    <source>
        <strain>ATCC 17616 / 249</strain>
    </source>
</reference>
<name>NUOA_BURM1</name>
<gene>
    <name evidence="1" type="primary">nuoA</name>
    <name type="ordered locus">Bmul_1028</name>
    <name type="ordered locus">BMULJ_02235</name>
</gene>
<protein>
    <recommendedName>
        <fullName evidence="1">NADH-quinone oxidoreductase subunit A</fullName>
        <ecNumber evidence="1">7.1.1.-</ecNumber>
    </recommendedName>
    <alternativeName>
        <fullName evidence="1">NADH dehydrogenase I subunit A</fullName>
    </alternativeName>
    <alternativeName>
        <fullName evidence="1">NDH-1 subunit A</fullName>
    </alternativeName>
    <alternativeName>
        <fullName evidence="1">NUO1</fullName>
    </alternativeName>
</protein>
<evidence type="ECO:0000255" key="1">
    <source>
        <dbReference type="HAMAP-Rule" id="MF_01394"/>
    </source>
</evidence>
<sequence length="119" mass="13511">MNLAAYYPVLLFLLVGTGLGIALVSIGKLLGPNKPDVEKNAPYECGFEAFEDARMKFDVRYYLVAILFIIFDLETAFLFPWGVALRDIGWPGFIAMMIFLLEFLLGFAYIWKKGGLDWE</sequence>
<keyword id="KW-0997">Cell inner membrane</keyword>
<keyword id="KW-1003">Cell membrane</keyword>
<keyword id="KW-0472">Membrane</keyword>
<keyword id="KW-0520">NAD</keyword>
<keyword id="KW-0874">Quinone</keyword>
<keyword id="KW-1185">Reference proteome</keyword>
<keyword id="KW-1278">Translocase</keyword>
<keyword id="KW-0812">Transmembrane</keyword>
<keyword id="KW-1133">Transmembrane helix</keyword>
<keyword id="KW-0813">Transport</keyword>
<keyword id="KW-0830">Ubiquinone</keyword>
<comment type="function">
    <text evidence="1">NDH-1 shuttles electrons from NADH, via FMN and iron-sulfur (Fe-S) centers, to quinones in the respiratory chain. The immediate electron acceptor for the enzyme in this species is believed to be ubiquinone. Couples the redox reaction to proton translocation (for every two electrons transferred, four hydrogen ions are translocated across the cytoplasmic membrane), and thus conserves the redox energy in a proton gradient.</text>
</comment>
<comment type="catalytic activity">
    <reaction evidence="1">
        <text>a quinone + NADH + 5 H(+)(in) = a quinol + NAD(+) + 4 H(+)(out)</text>
        <dbReference type="Rhea" id="RHEA:57888"/>
        <dbReference type="ChEBI" id="CHEBI:15378"/>
        <dbReference type="ChEBI" id="CHEBI:24646"/>
        <dbReference type="ChEBI" id="CHEBI:57540"/>
        <dbReference type="ChEBI" id="CHEBI:57945"/>
        <dbReference type="ChEBI" id="CHEBI:132124"/>
    </reaction>
</comment>
<comment type="subunit">
    <text evidence="1">NDH-1 is composed of 14 different subunits. Subunits NuoA, H, J, K, L, M, N constitute the membrane sector of the complex.</text>
</comment>
<comment type="subcellular location">
    <subcellularLocation>
        <location evidence="1">Cell inner membrane</location>
        <topology evidence="1">Multi-pass membrane protein</topology>
    </subcellularLocation>
</comment>
<comment type="similarity">
    <text evidence="1">Belongs to the complex I subunit 3 family.</text>
</comment>
<feature type="chain" id="PRO_0000362643" description="NADH-quinone oxidoreductase subunit A">
    <location>
        <begin position="1"/>
        <end position="119"/>
    </location>
</feature>
<feature type="transmembrane region" description="Helical" evidence="1">
    <location>
        <begin position="7"/>
        <end position="27"/>
    </location>
</feature>
<feature type="transmembrane region" description="Helical" evidence="1">
    <location>
        <begin position="63"/>
        <end position="83"/>
    </location>
</feature>
<feature type="transmembrane region" description="Helical" evidence="1">
    <location>
        <begin position="88"/>
        <end position="108"/>
    </location>
</feature>
<organism>
    <name type="scientific">Burkholderia multivorans (strain ATCC 17616 / 249)</name>
    <dbReference type="NCBI Taxonomy" id="395019"/>
    <lineage>
        <taxon>Bacteria</taxon>
        <taxon>Pseudomonadati</taxon>
        <taxon>Pseudomonadota</taxon>
        <taxon>Betaproteobacteria</taxon>
        <taxon>Burkholderiales</taxon>
        <taxon>Burkholderiaceae</taxon>
        <taxon>Burkholderia</taxon>
        <taxon>Burkholderia cepacia complex</taxon>
    </lineage>
</organism>
<proteinExistence type="inferred from homology"/>
<dbReference type="EC" id="7.1.1.-" evidence="1"/>
<dbReference type="EMBL" id="CP000868">
    <property type="protein sequence ID" value="ABX14719.1"/>
    <property type="molecule type" value="Genomic_DNA"/>
</dbReference>
<dbReference type="EMBL" id="AP009385">
    <property type="protein sequence ID" value="BAG44131.1"/>
    <property type="molecule type" value="Genomic_DNA"/>
</dbReference>
<dbReference type="RefSeq" id="WP_006398798.1">
    <property type="nucleotide sequence ID" value="NC_010804.1"/>
</dbReference>
<dbReference type="SMR" id="A9AJP4"/>
<dbReference type="STRING" id="395019.BMULJ_02235"/>
<dbReference type="KEGG" id="bmj:BMULJ_02235"/>
<dbReference type="KEGG" id="bmu:Bmul_1028"/>
<dbReference type="eggNOG" id="COG0838">
    <property type="taxonomic scope" value="Bacteria"/>
</dbReference>
<dbReference type="HOGENOM" id="CLU_119549_3_1_4"/>
<dbReference type="Proteomes" id="UP000008815">
    <property type="component" value="Chromosome 1"/>
</dbReference>
<dbReference type="GO" id="GO:0030964">
    <property type="term" value="C:NADH dehydrogenase complex"/>
    <property type="evidence" value="ECO:0007669"/>
    <property type="project" value="TreeGrafter"/>
</dbReference>
<dbReference type="GO" id="GO:0005886">
    <property type="term" value="C:plasma membrane"/>
    <property type="evidence" value="ECO:0007669"/>
    <property type="project" value="UniProtKB-SubCell"/>
</dbReference>
<dbReference type="GO" id="GO:0008137">
    <property type="term" value="F:NADH dehydrogenase (ubiquinone) activity"/>
    <property type="evidence" value="ECO:0007669"/>
    <property type="project" value="InterPro"/>
</dbReference>
<dbReference type="GO" id="GO:0050136">
    <property type="term" value="F:NADH:ubiquinone reductase (non-electrogenic) activity"/>
    <property type="evidence" value="ECO:0007669"/>
    <property type="project" value="UniProtKB-UniRule"/>
</dbReference>
<dbReference type="GO" id="GO:0048038">
    <property type="term" value="F:quinone binding"/>
    <property type="evidence" value="ECO:0007669"/>
    <property type="project" value="UniProtKB-KW"/>
</dbReference>
<dbReference type="FunFam" id="1.20.58.1610:FF:000004">
    <property type="entry name" value="NADH-quinone oxidoreductase subunit A"/>
    <property type="match status" value="1"/>
</dbReference>
<dbReference type="Gene3D" id="1.20.58.1610">
    <property type="entry name" value="NADH:ubiquinone/plastoquinone oxidoreductase, chain 3"/>
    <property type="match status" value="1"/>
</dbReference>
<dbReference type="HAMAP" id="MF_01394">
    <property type="entry name" value="NDH1_NuoA"/>
    <property type="match status" value="1"/>
</dbReference>
<dbReference type="InterPro" id="IPR023043">
    <property type="entry name" value="NAD(P)H_OxRDtase_bac/plastid"/>
</dbReference>
<dbReference type="InterPro" id="IPR000440">
    <property type="entry name" value="NADH_UbQ/plastoQ_OxRdtase_su3"/>
</dbReference>
<dbReference type="InterPro" id="IPR038430">
    <property type="entry name" value="NDAH_ubi_oxred_su3_sf"/>
</dbReference>
<dbReference type="PANTHER" id="PTHR11058">
    <property type="entry name" value="NADH-UBIQUINONE OXIDOREDUCTASE CHAIN 3"/>
    <property type="match status" value="1"/>
</dbReference>
<dbReference type="PANTHER" id="PTHR11058:SF9">
    <property type="entry name" value="NADH-UBIQUINONE OXIDOREDUCTASE CHAIN 3"/>
    <property type="match status" value="1"/>
</dbReference>
<dbReference type="Pfam" id="PF00507">
    <property type="entry name" value="Oxidored_q4"/>
    <property type="match status" value="1"/>
</dbReference>
<accession>A9AJP4</accession>